<evidence type="ECO:0000255" key="1">
    <source>
        <dbReference type="HAMAP-Rule" id="MF_00134"/>
    </source>
</evidence>
<feature type="chain" id="PRO_0000154268" description="Indole-3-glycerol phosphate synthase">
    <location>
        <begin position="1"/>
        <end position="265"/>
    </location>
</feature>
<proteinExistence type="inferred from homology"/>
<sequence>MSDILNTILARKADEIAERSARVPLAELVARSADLPLTRGFAAAMKASIAAGEPAVIAEVKKASPSKGVIRPDFHPADIAVSYEFGGASCLSVLTDMYFFQGSDAYLQQAREACTLPVLRKDFTVDPYQVYEARVLGADCILLIVSALEDQQLADLSGLAMQLGLDVLVEVHDIDELERAVQVPVPLVGINNRNLRTFEVSLQTTLDMRAAVPRDRVLVTESGIVTASDVQLMRSNGVNAFLVGETFMRAPEPGEALRQLFFAHD</sequence>
<name>TRPC_XANCP</name>
<gene>
    <name evidence="1" type="primary">trpC</name>
    <name type="ordered locus">XCC0470</name>
</gene>
<dbReference type="EC" id="4.1.1.48" evidence="1"/>
<dbReference type="EMBL" id="AE008922">
    <property type="protein sequence ID" value="AAM39788.1"/>
    <property type="molecule type" value="Genomic_DNA"/>
</dbReference>
<dbReference type="RefSeq" id="NP_635864.1">
    <property type="nucleotide sequence ID" value="NC_003902.1"/>
</dbReference>
<dbReference type="SMR" id="Q8PD70"/>
<dbReference type="STRING" id="190485.XCC0470"/>
<dbReference type="EnsemblBacteria" id="AAM39788">
    <property type="protein sequence ID" value="AAM39788"/>
    <property type="gene ID" value="XCC0470"/>
</dbReference>
<dbReference type="KEGG" id="xcc:XCC0470"/>
<dbReference type="PATRIC" id="fig|190485.4.peg.517"/>
<dbReference type="eggNOG" id="COG0134">
    <property type="taxonomic scope" value="Bacteria"/>
</dbReference>
<dbReference type="HOGENOM" id="CLU_034247_2_0_6"/>
<dbReference type="OrthoDB" id="9804217at2"/>
<dbReference type="UniPathway" id="UPA00035">
    <property type="reaction ID" value="UER00043"/>
</dbReference>
<dbReference type="Proteomes" id="UP000001010">
    <property type="component" value="Chromosome"/>
</dbReference>
<dbReference type="GO" id="GO:0004425">
    <property type="term" value="F:indole-3-glycerol-phosphate synthase activity"/>
    <property type="evidence" value="ECO:0000318"/>
    <property type="project" value="GO_Central"/>
</dbReference>
<dbReference type="GO" id="GO:0004640">
    <property type="term" value="F:phosphoribosylanthranilate isomerase activity"/>
    <property type="evidence" value="ECO:0000318"/>
    <property type="project" value="GO_Central"/>
</dbReference>
<dbReference type="GO" id="GO:0000162">
    <property type="term" value="P:L-tryptophan biosynthetic process"/>
    <property type="evidence" value="ECO:0000318"/>
    <property type="project" value="GO_Central"/>
</dbReference>
<dbReference type="CDD" id="cd00331">
    <property type="entry name" value="IGPS"/>
    <property type="match status" value="1"/>
</dbReference>
<dbReference type="FunFam" id="3.20.20.70:FF:000024">
    <property type="entry name" value="Indole-3-glycerol phosphate synthase"/>
    <property type="match status" value="1"/>
</dbReference>
<dbReference type="Gene3D" id="3.20.20.70">
    <property type="entry name" value="Aldolase class I"/>
    <property type="match status" value="1"/>
</dbReference>
<dbReference type="HAMAP" id="MF_00134_B">
    <property type="entry name" value="IGPS_B"/>
    <property type="match status" value="1"/>
</dbReference>
<dbReference type="InterPro" id="IPR013785">
    <property type="entry name" value="Aldolase_TIM"/>
</dbReference>
<dbReference type="InterPro" id="IPR045186">
    <property type="entry name" value="Indole-3-glycerol_P_synth"/>
</dbReference>
<dbReference type="InterPro" id="IPR013798">
    <property type="entry name" value="Indole-3-glycerol_P_synth_dom"/>
</dbReference>
<dbReference type="InterPro" id="IPR001468">
    <property type="entry name" value="Indole-3-GlycerolPSynthase_CS"/>
</dbReference>
<dbReference type="InterPro" id="IPR011060">
    <property type="entry name" value="RibuloseP-bd_barrel"/>
</dbReference>
<dbReference type="NCBIfam" id="NF001370">
    <property type="entry name" value="PRK00278.1-2"/>
    <property type="match status" value="1"/>
</dbReference>
<dbReference type="NCBIfam" id="NF001373">
    <property type="entry name" value="PRK00278.1-6"/>
    <property type="match status" value="1"/>
</dbReference>
<dbReference type="NCBIfam" id="NF001377">
    <property type="entry name" value="PRK00278.2-4"/>
    <property type="match status" value="1"/>
</dbReference>
<dbReference type="PANTHER" id="PTHR22854:SF2">
    <property type="entry name" value="INDOLE-3-GLYCEROL-PHOSPHATE SYNTHASE"/>
    <property type="match status" value="1"/>
</dbReference>
<dbReference type="PANTHER" id="PTHR22854">
    <property type="entry name" value="TRYPTOPHAN BIOSYNTHESIS PROTEIN"/>
    <property type="match status" value="1"/>
</dbReference>
<dbReference type="Pfam" id="PF00218">
    <property type="entry name" value="IGPS"/>
    <property type="match status" value="1"/>
</dbReference>
<dbReference type="SUPFAM" id="SSF51366">
    <property type="entry name" value="Ribulose-phoshate binding barrel"/>
    <property type="match status" value="1"/>
</dbReference>
<dbReference type="PROSITE" id="PS00614">
    <property type="entry name" value="IGPS"/>
    <property type="match status" value="1"/>
</dbReference>
<keyword id="KW-0028">Amino-acid biosynthesis</keyword>
<keyword id="KW-0057">Aromatic amino acid biosynthesis</keyword>
<keyword id="KW-0210">Decarboxylase</keyword>
<keyword id="KW-0456">Lyase</keyword>
<keyword id="KW-1185">Reference proteome</keyword>
<keyword id="KW-0822">Tryptophan biosynthesis</keyword>
<organism>
    <name type="scientific">Xanthomonas campestris pv. campestris (strain ATCC 33913 / DSM 3586 / NCPPB 528 / LMG 568 / P 25)</name>
    <dbReference type="NCBI Taxonomy" id="190485"/>
    <lineage>
        <taxon>Bacteria</taxon>
        <taxon>Pseudomonadati</taxon>
        <taxon>Pseudomonadota</taxon>
        <taxon>Gammaproteobacteria</taxon>
        <taxon>Lysobacterales</taxon>
        <taxon>Lysobacteraceae</taxon>
        <taxon>Xanthomonas</taxon>
    </lineage>
</organism>
<comment type="catalytic activity">
    <reaction evidence="1">
        <text>1-(2-carboxyphenylamino)-1-deoxy-D-ribulose 5-phosphate + H(+) = (1S,2R)-1-C-(indol-3-yl)glycerol 3-phosphate + CO2 + H2O</text>
        <dbReference type="Rhea" id="RHEA:23476"/>
        <dbReference type="ChEBI" id="CHEBI:15377"/>
        <dbReference type="ChEBI" id="CHEBI:15378"/>
        <dbReference type="ChEBI" id="CHEBI:16526"/>
        <dbReference type="ChEBI" id="CHEBI:58613"/>
        <dbReference type="ChEBI" id="CHEBI:58866"/>
        <dbReference type="EC" id="4.1.1.48"/>
    </reaction>
</comment>
<comment type="pathway">
    <text evidence="1">Amino-acid biosynthesis; L-tryptophan biosynthesis; L-tryptophan from chorismate: step 4/5.</text>
</comment>
<comment type="similarity">
    <text evidence="1">Belongs to the TrpC family.</text>
</comment>
<accession>Q8PD70</accession>
<reference key="1">
    <citation type="journal article" date="2002" name="Nature">
        <title>Comparison of the genomes of two Xanthomonas pathogens with differing host specificities.</title>
        <authorList>
            <person name="da Silva A.C.R."/>
            <person name="Ferro J.A."/>
            <person name="Reinach F.C."/>
            <person name="Farah C.S."/>
            <person name="Furlan L.R."/>
            <person name="Quaggio R.B."/>
            <person name="Monteiro-Vitorello C.B."/>
            <person name="Van Sluys M.A."/>
            <person name="Almeida N.F. Jr."/>
            <person name="Alves L.M.C."/>
            <person name="do Amaral A.M."/>
            <person name="Bertolini M.C."/>
            <person name="Camargo L.E.A."/>
            <person name="Camarotte G."/>
            <person name="Cannavan F."/>
            <person name="Cardozo J."/>
            <person name="Chambergo F."/>
            <person name="Ciapina L.P."/>
            <person name="Cicarelli R.M.B."/>
            <person name="Coutinho L.L."/>
            <person name="Cursino-Santos J.R."/>
            <person name="El-Dorry H."/>
            <person name="Faria J.B."/>
            <person name="Ferreira A.J.S."/>
            <person name="Ferreira R.C.C."/>
            <person name="Ferro M.I.T."/>
            <person name="Formighieri E.F."/>
            <person name="Franco M.C."/>
            <person name="Greggio C.C."/>
            <person name="Gruber A."/>
            <person name="Katsuyama A.M."/>
            <person name="Kishi L.T."/>
            <person name="Leite R.P."/>
            <person name="Lemos E.G.M."/>
            <person name="Lemos M.V.F."/>
            <person name="Locali E.C."/>
            <person name="Machado M.A."/>
            <person name="Madeira A.M.B.N."/>
            <person name="Martinez-Rossi N.M."/>
            <person name="Martins E.C."/>
            <person name="Meidanis J."/>
            <person name="Menck C.F.M."/>
            <person name="Miyaki C.Y."/>
            <person name="Moon D.H."/>
            <person name="Moreira L.M."/>
            <person name="Novo M.T.M."/>
            <person name="Okura V.K."/>
            <person name="Oliveira M.C."/>
            <person name="Oliveira V.R."/>
            <person name="Pereira H.A."/>
            <person name="Rossi A."/>
            <person name="Sena J.A.D."/>
            <person name="Silva C."/>
            <person name="de Souza R.F."/>
            <person name="Spinola L.A.F."/>
            <person name="Takita M.A."/>
            <person name="Tamura R.E."/>
            <person name="Teixeira E.C."/>
            <person name="Tezza R.I.D."/>
            <person name="Trindade dos Santos M."/>
            <person name="Truffi D."/>
            <person name="Tsai S.M."/>
            <person name="White F.F."/>
            <person name="Setubal J.C."/>
            <person name="Kitajima J.P."/>
        </authorList>
    </citation>
    <scope>NUCLEOTIDE SEQUENCE [LARGE SCALE GENOMIC DNA]</scope>
    <source>
        <strain>ATCC 33913 / DSM 3586 / NCPPB 528 / LMG 568 / P 25</strain>
    </source>
</reference>
<protein>
    <recommendedName>
        <fullName evidence="1">Indole-3-glycerol phosphate synthase</fullName>
        <shortName evidence="1">IGPS</shortName>
        <ecNumber evidence="1">4.1.1.48</ecNumber>
    </recommendedName>
</protein>